<dbReference type="EMBL" id="CP000468">
    <property type="protein sequence ID" value="ABJ02388.1"/>
    <property type="molecule type" value="Genomic_DNA"/>
</dbReference>
<dbReference type="RefSeq" id="WP_000091700.1">
    <property type="nucleotide sequence ID" value="NZ_CADILS010000010.1"/>
</dbReference>
<dbReference type="BMRB" id="A1AFE8"/>
<dbReference type="SMR" id="A1AFE8"/>
<dbReference type="KEGG" id="ecv:APECO1_3539"/>
<dbReference type="HOGENOM" id="CLU_170994_0_0_6"/>
<dbReference type="Proteomes" id="UP000008216">
    <property type="component" value="Chromosome"/>
</dbReference>
<dbReference type="GO" id="GO:0005829">
    <property type="term" value="C:cytosol"/>
    <property type="evidence" value="ECO:0007669"/>
    <property type="project" value="TreeGrafter"/>
</dbReference>
<dbReference type="GO" id="GO:0005506">
    <property type="term" value="F:iron ion binding"/>
    <property type="evidence" value="ECO:0007669"/>
    <property type="project" value="UniProtKB-UniRule"/>
</dbReference>
<dbReference type="GO" id="GO:0034599">
    <property type="term" value="P:cellular response to oxidative stress"/>
    <property type="evidence" value="ECO:0007669"/>
    <property type="project" value="TreeGrafter"/>
</dbReference>
<dbReference type="FunFam" id="1.10.3880.10:FF:000001">
    <property type="entry name" value="Probable Fe(2+)-trafficking protein"/>
    <property type="match status" value="1"/>
</dbReference>
<dbReference type="Gene3D" id="1.10.3880.10">
    <property type="entry name" value="Fe(II) trafficking protein YggX"/>
    <property type="match status" value="1"/>
</dbReference>
<dbReference type="HAMAP" id="MF_00686">
    <property type="entry name" value="Fe_traffic_YggX"/>
    <property type="match status" value="1"/>
</dbReference>
<dbReference type="InterPro" id="IPR007457">
    <property type="entry name" value="Fe_traffick_prot_YggX"/>
</dbReference>
<dbReference type="InterPro" id="IPR036766">
    <property type="entry name" value="Fe_traffick_prot_YggX_sf"/>
</dbReference>
<dbReference type="NCBIfam" id="NF003817">
    <property type="entry name" value="PRK05408.1"/>
    <property type="match status" value="1"/>
</dbReference>
<dbReference type="PANTHER" id="PTHR36965">
    <property type="entry name" value="FE(2+)-TRAFFICKING PROTEIN-RELATED"/>
    <property type="match status" value="1"/>
</dbReference>
<dbReference type="PANTHER" id="PTHR36965:SF1">
    <property type="entry name" value="FE(2+)-TRAFFICKING PROTEIN-RELATED"/>
    <property type="match status" value="1"/>
</dbReference>
<dbReference type="Pfam" id="PF04362">
    <property type="entry name" value="Iron_traffic"/>
    <property type="match status" value="1"/>
</dbReference>
<dbReference type="PIRSF" id="PIRSF029827">
    <property type="entry name" value="Fe_traffic_YggX"/>
    <property type="match status" value="1"/>
</dbReference>
<dbReference type="SUPFAM" id="SSF111148">
    <property type="entry name" value="YggX-like"/>
    <property type="match status" value="1"/>
</dbReference>
<gene>
    <name evidence="1" type="primary">yggX</name>
    <name type="ordered locus">Ecok1_28940</name>
    <name type="ORF">APECO1_3539</name>
</gene>
<protein>
    <recommendedName>
        <fullName evidence="1">Probable Fe(2+)-trafficking protein</fullName>
    </recommendedName>
</protein>
<comment type="function">
    <text evidence="1">Could be a mediator in iron transactions between iron acquisition and iron-requiring processes, such as synthesis and/or repair of Fe-S clusters in biosynthetic enzymes.</text>
</comment>
<comment type="subunit">
    <text evidence="1">Monomer.</text>
</comment>
<comment type="similarity">
    <text evidence="1">Belongs to the Fe(2+)-trafficking protein family.</text>
</comment>
<feature type="chain" id="PRO_1000045031" description="Probable Fe(2+)-trafficking protein">
    <location>
        <begin position="1"/>
        <end position="91"/>
    </location>
</feature>
<keyword id="KW-0408">Iron</keyword>
<keyword id="KW-1185">Reference proteome</keyword>
<evidence type="ECO:0000255" key="1">
    <source>
        <dbReference type="HAMAP-Rule" id="MF_00686"/>
    </source>
</evidence>
<accession>A1AFE8</accession>
<sequence length="91" mass="10953">MSRTIFCTFLQREAEGQDFQLYPGELGKRIYNEISKEAWAQWQHKQTMLINEKKLNMMNAEHRKLLEQEMVNFLFEGKEVHIEGYTPEDKK</sequence>
<name>FETP_ECOK1</name>
<proteinExistence type="inferred from homology"/>
<reference key="1">
    <citation type="journal article" date="2007" name="J. Bacteriol.">
        <title>The genome sequence of avian pathogenic Escherichia coli strain O1:K1:H7 shares strong similarities with human extraintestinal pathogenic E. coli genomes.</title>
        <authorList>
            <person name="Johnson T.J."/>
            <person name="Kariyawasam S."/>
            <person name="Wannemuehler Y."/>
            <person name="Mangiamele P."/>
            <person name="Johnson S.J."/>
            <person name="Doetkott C."/>
            <person name="Skyberg J.A."/>
            <person name="Lynne A.M."/>
            <person name="Johnson J.R."/>
            <person name="Nolan L.K."/>
        </authorList>
    </citation>
    <scope>NUCLEOTIDE SEQUENCE [LARGE SCALE GENOMIC DNA]</scope>
</reference>
<organism>
    <name type="scientific">Escherichia coli O1:K1 / APEC</name>
    <dbReference type="NCBI Taxonomy" id="405955"/>
    <lineage>
        <taxon>Bacteria</taxon>
        <taxon>Pseudomonadati</taxon>
        <taxon>Pseudomonadota</taxon>
        <taxon>Gammaproteobacteria</taxon>
        <taxon>Enterobacterales</taxon>
        <taxon>Enterobacteriaceae</taxon>
        <taxon>Escherichia</taxon>
    </lineage>
</organism>